<accession>Q1LU62</accession>
<feature type="chain" id="PRO_1000094462" description="3-dehydroquinate synthase">
    <location>
        <begin position="1"/>
        <end position="359"/>
    </location>
</feature>
<feature type="binding site" evidence="1">
    <location>
        <begin position="71"/>
        <end position="76"/>
    </location>
    <ligand>
        <name>NAD(+)</name>
        <dbReference type="ChEBI" id="CHEBI:57540"/>
    </ligand>
</feature>
<feature type="binding site" evidence="1">
    <location>
        <begin position="105"/>
        <end position="109"/>
    </location>
    <ligand>
        <name>NAD(+)</name>
        <dbReference type="ChEBI" id="CHEBI:57540"/>
    </ligand>
</feature>
<feature type="binding site" evidence="1">
    <location>
        <begin position="129"/>
        <end position="130"/>
    </location>
    <ligand>
        <name>NAD(+)</name>
        <dbReference type="ChEBI" id="CHEBI:57540"/>
    </ligand>
</feature>
<feature type="binding site" evidence="1">
    <location>
        <position position="142"/>
    </location>
    <ligand>
        <name>NAD(+)</name>
        <dbReference type="ChEBI" id="CHEBI:57540"/>
    </ligand>
</feature>
<feature type="binding site" evidence="1">
    <location>
        <position position="151"/>
    </location>
    <ligand>
        <name>NAD(+)</name>
        <dbReference type="ChEBI" id="CHEBI:57540"/>
    </ligand>
</feature>
<feature type="binding site" evidence="1">
    <location>
        <begin position="169"/>
        <end position="172"/>
    </location>
    <ligand>
        <name>NAD(+)</name>
        <dbReference type="ChEBI" id="CHEBI:57540"/>
    </ligand>
</feature>
<feature type="binding site" evidence="1">
    <location>
        <position position="184"/>
    </location>
    <ligand>
        <name>Zn(2+)</name>
        <dbReference type="ChEBI" id="CHEBI:29105"/>
    </ligand>
</feature>
<feature type="binding site" evidence="1">
    <location>
        <position position="247"/>
    </location>
    <ligand>
        <name>Zn(2+)</name>
        <dbReference type="ChEBI" id="CHEBI:29105"/>
    </ligand>
</feature>
<feature type="binding site" evidence="1">
    <location>
        <position position="264"/>
    </location>
    <ligand>
        <name>Zn(2+)</name>
        <dbReference type="ChEBI" id="CHEBI:29105"/>
    </ligand>
</feature>
<dbReference type="EC" id="4.2.3.4" evidence="1"/>
<dbReference type="EMBL" id="CP000238">
    <property type="protein sequence ID" value="ABF14084.1"/>
    <property type="molecule type" value="Genomic_DNA"/>
</dbReference>
<dbReference type="RefSeq" id="WP_011520235.1">
    <property type="nucleotide sequence ID" value="NC_007984.1"/>
</dbReference>
<dbReference type="SMR" id="Q1LU62"/>
<dbReference type="STRING" id="374463.BCI_0023"/>
<dbReference type="KEGG" id="bci:BCI_0023"/>
<dbReference type="HOGENOM" id="CLU_001201_0_2_6"/>
<dbReference type="OrthoDB" id="9806583at2"/>
<dbReference type="UniPathway" id="UPA00053">
    <property type="reaction ID" value="UER00085"/>
</dbReference>
<dbReference type="Proteomes" id="UP000002427">
    <property type="component" value="Chromosome"/>
</dbReference>
<dbReference type="GO" id="GO:0005737">
    <property type="term" value="C:cytoplasm"/>
    <property type="evidence" value="ECO:0007669"/>
    <property type="project" value="UniProtKB-SubCell"/>
</dbReference>
<dbReference type="GO" id="GO:0003856">
    <property type="term" value="F:3-dehydroquinate synthase activity"/>
    <property type="evidence" value="ECO:0007669"/>
    <property type="project" value="UniProtKB-UniRule"/>
</dbReference>
<dbReference type="GO" id="GO:0046872">
    <property type="term" value="F:metal ion binding"/>
    <property type="evidence" value="ECO:0007669"/>
    <property type="project" value="UniProtKB-KW"/>
</dbReference>
<dbReference type="GO" id="GO:0000166">
    <property type="term" value="F:nucleotide binding"/>
    <property type="evidence" value="ECO:0007669"/>
    <property type="project" value="UniProtKB-KW"/>
</dbReference>
<dbReference type="GO" id="GO:0008652">
    <property type="term" value="P:amino acid biosynthetic process"/>
    <property type="evidence" value="ECO:0007669"/>
    <property type="project" value="UniProtKB-KW"/>
</dbReference>
<dbReference type="GO" id="GO:0009073">
    <property type="term" value="P:aromatic amino acid family biosynthetic process"/>
    <property type="evidence" value="ECO:0007669"/>
    <property type="project" value="UniProtKB-KW"/>
</dbReference>
<dbReference type="GO" id="GO:0009423">
    <property type="term" value="P:chorismate biosynthetic process"/>
    <property type="evidence" value="ECO:0007669"/>
    <property type="project" value="UniProtKB-UniRule"/>
</dbReference>
<dbReference type="CDD" id="cd08195">
    <property type="entry name" value="DHQS"/>
    <property type="match status" value="1"/>
</dbReference>
<dbReference type="FunFam" id="3.40.50.1970:FF:000001">
    <property type="entry name" value="3-dehydroquinate synthase"/>
    <property type="match status" value="1"/>
</dbReference>
<dbReference type="Gene3D" id="3.40.50.1970">
    <property type="match status" value="1"/>
</dbReference>
<dbReference type="Gene3D" id="1.20.1090.10">
    <property type="entry name" value="Dehydroquinate synthase-like - alpha domain"/>
    <property type="match status" value="1"/>
</dbReference>
<dbReference type="HAMAP" id="MF_00110">
    <property type="entry name" value="DHQ_synthase"/>
    <property type="match status" value="1"/>
</dbReference>
<dbReference type="InterPro" id="IPR050071">
    <property type="entry name" value="Dehydroquinate_synthase"/>
</dbReference>
<dbReference type="InterPro" id="IPR016037">
    <property type="entry name" value="DHQ_synth_AroB"/>
</dbReference>
<dbReference type="InterPro" id="IPR030963">
    <property type="entry name" value="DHQ_synth_fam"/>
</dbReference>
<dbReference type="InterPro" id="IPR030960">
    <property type="entry name" value="DHQS/DOIS_N"/>
</dbReference>
<dbReference type="InterPro" id="IPR056179">
    <property type="entry name" value="DHQS_C"/>
</dbReference>
<dbReference type="NCBIfam" id="TIGR01357">
    <property type="entry name" value="aroB"/>
    <property type="match status" value="1"/>
</dbReference>
<dbReference type="PANTHER" id="PTHR43622">
    <property type="entry name" value="3-DEHYDROQUINATE SYNTHASE"/>
    <property type="match status" value="1"/>
</dbReference>
<dbReference type="PANTHER" id="PTHR43622:SF7">
    <property type="entry name" value="3-DEHYDROQUINATE SYNTHASE, CHLOROPLASTIC"/>
    <property type="match status" value="1"/>
</dbReference>
<dbReference type="Pfam" id="PF01761">
    <property type="entry name" value="DHQ_synthase"/>
    <property type="match status" value="1"/>
</dbReference>
<dbReference type="Pfam" id="PF24621">
    <property type="entry name" value="DHQS_C"/>
    <property type="match status" value="1"/>
</dbReference>
<dbReference type="PIRSF" id="PIRSF001455">
    <property type="entry name" value="DHQ_synth"/>
    <property type="match status" value="1"/>
</dbReference>
<dbReference type="SUPFAM" id="SSF56796">
    <property type="entry name" value="Dehydroquinate synthase-like"/>
    <property type="match status" value="1"/>
</dbReference>
<sequence length="359" mass="39636">MDRISITLGERSYAIIIANGLLQDPTSFWPLARGDKVLVVTSNYIASLYLEILSQILTELGIIIDLCILPDGEQYKSLAMIDKIFTALLKKYHNNDTTIIAFGGGVIGDLAGFAAANYLRGVRIIQIPTTLLSQVDSSVGGKTAVNHPLGKNMIGTIYQPTSVIIDPNCLATLPRRELSSGLAEVIKYGILFDVNFFNWLELNIDALLGLEPHTVTWCIRRCCEIKAKIVTADEHEKGVRTLLNLGHTYGHAIETHMGYGNWLHGEAVAVGIMIVVQVSCSLGYFSNVDTERVKTLLLRAGLPVIGPMKISLEDYLPYIMRDKKTTNGILHIILPLKLGSAEVHTYRISEWQKLIAHLI</sequence>
<keyword id="KW-0028">Amino-acid biosynthesis</keyword>
<keyword id="KW-0057">Aromatic amino acid biosynthesis</keyword>
<keyword id="KW-0170">Cobalt</keyword>
<keyword id="KW-0963">Cytoplasm</keyword>
<keyword id="KW-0456">Lyase</keyword>
<keyword id="KW-0479">Metal-binding</keyword>
<keyword id="KW-0520">NAD</keyword>
<keyword id="KW-0547">Nucleotide-binding</keyword>
<keyword id="KW-1185">Reference proteome</keyword>
<keyword id="KW-0862">Zinc</keyword>
<evidence type="ECO:0000255" key="1">
    <source>
        <dbReference type="HAMAP-Rule" id="MF_00110"/>
    </source>
</evidence>
<reference key="1">
    <citation type="journal article" date="2006" name="PLoS Biol.">
        <title>Metabolic complementarity and genomics of the dual bacterial symbiosis of sharpshooters.</title>
        <authorList>
            <person name="Wu D."/>
            <person name="Daugherty S.C."/>
            <person name="Van Aken S.E."/>
            <person name="Pai G.H."/>
            <person name="Watkins K.L."/>
            <person name="Khouri H."/>
            <person name="Tallon L.J."/>
            <person name="Zaborsky J.M."/>
            <person name="Dunbar H.E."/>
            <person name="Tran P.L."/>
            <person name="Moran N.A."/>
            <person name="Eisen J.A."/>
        </authorList>
    </citation>
    <scope>NUCLEOTIDE SEQUENCE [LARGE SCALE GENOMIC DNA]</scope>
</reference>
<gene>
    <name evidence="1" type="primary">aroB</name>
    <name type="ordered locus">BCI_0023</name>
</gene>
<organism>
    <name type="scientific">Baumannia cicadellinicola subsp. Homalodisca coagulata</name>
    <dbReference type="NCBI Taxonomy" id="374463"/>
    <lineage>
        <taxon>Bacteria</taxon>
        <taxon>Pseudomonadati</taxon>
        <taxon>Pseudomonadota</taxon>
        <taxon>Gammaproteobacteria</taxon>
        <taxon>Candidatus Palibaumannia</taxon>
    </lineage>
</organism>
<comment type="function">
    <text evidence="1">Catalyzes the conversion of 3-deoxy-D-arabino-heptulosonate 7-phosphate (DAHP) to dehydroquinate (DHQ).</text>
</comment>
<comment type="catalytic activity">
    <reaction evidence="1">
        <text>7-phospho-2-dehydro-3-deoxy-D-arabino-heptonate = 3-dehydroquinate + phosphate</text>
        <dbReference type="Rhea" id="RHEA:21968"/>
        <dbReference type="ChEBI" id="CHEBI:32364"/>
        <dbReference type="ChEBI" id="CHEBI:43474"/>
        <dbReference type="ChEBI" id="CHEBI:58394"/>
        <dbReference type="EC" id="4.2.3.4"/>
    </reaction>
</comment>
<comment type="cofactor">
    <cofactor evidence="1">
        <name>Co(2+)</name>
        <dbReference type="ChEBI" id="CHEBI:48828"/>
    </cofactor>
    <cofactor evidence="1">
        <name>Zn(2+)</name>
        <dbReference type="ChEBI" id="CHEBI:29105"/>
    </cofactor>
    <text evidence="1">Binds 1 divalent metal cation per subunit. Can use either Co(2+) or Zn(2+).</text>
</comment>
<comment type="cofactor">
    <cofactor evidence="1">
        <name>NAD(+)</name>
        <dbReference type="ChEBI" id="CHEBI:57540"/>
    </cofactor>
</comment>
<comment type="pathway">
    <text evidence="1">Metabolic intermediate biosynthesis; chorismate biosynthesis; chorismate from D-erythrose 4-phosphate and phosphoenolpyruvate: step 2/7.</text>
</comment>
<comment type="subcellular location">
    <subcellularLocation>
        <location evidence="1">Cytoplasm</location>
    </subcellularLocation>
</comment>
<comment type="similarity">
    <text evidence="1">Belongs to the sugar phosphate cyclases superfamily. Dehydroquinate synthase family.</text>
</comment>
<protein>
    <recommendedName>
        <fullName evidence="1">3-dehydroquinate synthase</fullName>
        <shortName evidence="1">DHQS</shortName>
        <ecNumber evidence="1">4.2.3.4</ecNumber>
    </recommendedName>
</protein>
<name>AROB_BAUCH</name>
<proteinExistence type="inferred from homology"/>